<comment type="subunit">
    <text evidence="2 3 6 7 8 12">Component of the mitochondrial large ribosomal subunit (mt-LSU) (PubMed:11551941, PubMed:25278503, PubMed:28892042, PubMed:35177605). Mature mammalian 55S mitochondrial ribosomes consist of a small (28S) and a large (39S) subunit. The 28S small subunit contains a 12S ribosomal RNA (12S mt-rRNA) and 30 different proteins. The 39S large subunit contains a 16S rRNA (16S mt-rRNA), a copy of mitochondrial valine transfer RNA (mt-tRNA(Val)), which plays an integral structural role, and 52 different proteins (PubMed:11551941, PubMed:25278503). Interacts with OXA1L.</text>
</comment>
<comment type="interaction">
    <interactant intactId="EBI-723426">
        <id>Q13084</id>
    </interactant>
    <interactant intactId="EBI-11096309">
        <id>Q9NYB9-2</id>
        <label>ABI2</label>
    </interactant>
    <organismsDiffer>false</organismsDiffer>
    <experiments>3</experiments>
</comment>
<comment type="interaction">
    <interactant intactId="EBI-723426">
        <id>Q13084</id>
    </interactant>
    <interactant intactId="EBI-744695">
        <id>Q8N9N5</id>
        <label>BANP</label>
    </interactant>
    <organismsDiffer>false</organismsDiffer>
    <experiments>3</experiments>
</comment>
<comment type="interaction">
    <interactant intactId="EBI-723426">
        <id>Q13084</id>
    </interactant>
    <interactant intactId="EBI-5278764">
        <id>Q96GN5</id>
        <label>CDCA7L</label>
    </interactant>
    <organismsDiffer>false</organismsDiffer>
    <experiments>3</experiments>
</comment>
<comment type="interaction">
    <interactant intactId="EBI-723426">
        <id>Q13084</id>
    </interactant>
    <interactant intactId="EBI-1181367">
        <id>Q01850</id>
        <label>CDR2</label>
    </interactant>
    <organismsDiffer>false</organismsDiffer>
    <experiments>3</experiments>
</comment>
<comment type="interaction">
    <interactant intactId="EBI-723426">
        <id>Q13084</id>
    </interactant>
    <interactant intactId="EBI-744099">
        <id>Q9H0I2</id>
        <label>ENKD1</label>
    </interactant>
    <organismsDiffer>false</organismsDiffer>
    <experiments>3</experiments>
</comment>
<comment type="interaction">
    <interactant intactId="EBI-723426">
        <id>Q13084</id>
    </interactant>
    <interactant intactId="EBI-10175124">
        <id>Q8IZU0</id>
        <label>FAM9B</label>
    </interactant>
    <organismsDiffer>false</organismsDiffer>
    <experiments>3</experiments>
</comment>
<comment type="interaction">
    <interactant intactId="EBI-723426">
        <id>Q13084</id>
    </interactant>
    <interactant intactId="EBI-2549423">
        <id>Q6NT76</id>
        <label>HMBOX1</label>
    </interactant>
    <organismsDiffer>false</organismsDiffer>
    <experiments>3</experiments>
</comment>
<comment type="interaction">
    <interactant intactId="EBI-723426">
        <id>Q13084</id>
    </interactant>
    <interactant intactId="EBI-747204">
        <id>Q9UKT9</id>
        <label>IKZF3</label>
    </interactant>
    <organismsDiffer>false</organismsDiffer>
    <experiments>3</experiments>
</comment>
<comment type="interaction">
    <interactant intactId="EBI-723426">
        <id>Q13084</id>
    </interactant>
    <interactant intactId="EBI-12036449">
        <id>Q659C4-6</id>
        <label>LARP1B</label>
    </interactant>
    <organismsDiffer>false</organismsDiffer>
    <experiments>3</experiments>
</comment>
<comment type="interaction">
    <interactant intactId="EBI-723426">
        <id>Q13084</id>
    </interactant>
    <interactant intactId="EBI-726510">
        <id>Q96BZ8</id>
        <label>LENG1</label>
    </interactant>
    <organismsDiffer>false</organismsDiffer>
    <experiments>3</experiments>
</comment>
<comment type="interaction">
    <interactant intactId="EBI-723426">
        <id>Q13084</id>
    </interactant>
    <interactant intactId="EBI-10271199">
        <id>Q8NI38</id>
        <label>NFKBID</label>
    </interactant>
    <organismsDiffer>false</organismsDiffer>
    <experiments>3</experiments>
</comment>
<comment type="interaction">
    <interactant intactId="EBI-723426">
        <id>Q13084</id>
    </interactant>
    <interactant intactId="EBI-368321">
        <id>O60437</id>
        <label>PPL</label>
    </interactant>
    <organismsDiffer>false</organismsDiffer>
    <experiments>3</experiments>
</comment>
<comment type="interaction">
    <interactant intactId="EBI-723426">
        <id>Q13084</id>
    </interactant>
    <interactant intactId="EBI-748391">
        <id>Q9BWG6</id>
        <label>SCNM1</label>
    </interactant>
    <organismsDiffer>false</organismsDiffer>
    <experiments>3</experiments>
</comment>
<comment type="interaction">
    <interactant intactId="EBI-723426">
        <id>Q13084</id>
    </interactant>
    <interactant intactId="EBI-2796967">
        <id>Q10587</id>
        <label>TEF</label>
    </interactant>
    <organismsDiffer>false</organismsDiffer>
    <experiments>3</experiments>
</comment>
<comment type="interaction">
    <interactant intactId="EBI-723426">
        <id>Q13084</id>
    </interactant>
    <interactant intactId="EBI-744798">
        <id>O43734</id>
        <label>TRAF3IP2</label>
    </interactant>
    <organismsDiffer>false</organismsDiffer>
    <experiments>3</experiments>
</comment>
<comment type="interaction">
    <interactant intactId="EBI-723426">
        <id>Q13084</id>
    </interactant>
    <interactant intactId="EBI-3650647">
        <id>Q9BUZ4</id>
        <label>TRAF4</label>
    </interactant>
    <organismsDiffer>false</organismsDiffer>
    <experiments>4</experiments>
</comment>
<comment type="interaction">
    <interactant intactId="EBI-723426">
        <id>Q13084</id>
    </interactant>
    <interactant intactId="EBI-9053916">
        <id>Q63HK5</id>
        <label>TSHZ3</label>
    </interactant>
    <organismsDiffer>false</organismsDiffer>
    <experiments>3</experiments>
</comment>
<comment type="interaction">
    <interactant intactId="EBI-723426">
        <id>Q13084</id>
    </interactant>
    <interactant intactId="EBI-3918381">
        <id>Q96PN8</id>
        <label>TSSK3</label>
    </interactant>
    <organismsDiffer>false</organismsDiffer>
    <experiments>3</experiments>
</comment>
<comment type="interaction">
    <interactant intactId="EBI-723426">
        <id>Q13084</id>
    </interactant>
    <interactant intactId="EBI-11528386">
        <id>O95045-2</id>
        <label>UPP2</label>
    </interactant>
    <organismsDiffer>false</organismsDiffer>
    <experiments>3</experiments>
</comment>
<comment type="interaction">
    <interactant intactId="EBI-723426">
        <id>Q13084</id>
    </interactant>
    <interactant intactId="EBI-743272">
        <id>O75604</id>
        <label>USP2</label>
    </interactant>
    <organismsDiffer>false</organismsDiffer>
    <experiments>3</experiments>
</comment>
<comment type="interaction">
    <interactant intactId="EBI-723426">
        <id>Q13084</id>
    </interactant>
    <interactant intactId="EBI-2511991">
        <id>Q9Y2K6</id>
        <label>USP20</label>
    </interactant>
    <organismsDiffer>false</organismsDiffer>
    <experiments>3</experiments>
</comment>
<comment type="interaction">
    <interactant intactId="EBI-723426">
        <id>Q13084</id>
    </interactant>
    <interactant intactId="EBI-625509">
        <id>Q8N720</id>
        <label>ZNF655</label>
    </interactant>
    <organismsDiffer>false</organismsDiffer>
    <experiments>3</experiments>
</comment>
<comment type="subcellular location">
    <subcellularLocation>
        <location evidence="6 7">Mitochondrion</location>
    </subcellularLocation>
</comment>
<comment type="tissue specificity">
    <text>Found in a variety of normal tissues including spleen, testes, thymus, liver, kidney, brain, adrenal, lung and retinal tissue.</text>
</comment>
<comment type="miscellaneous">
    <text>Potentially represents an important therapeutic reagent for HLA-A24 patients. This antigen is recognized by tumor-infiltrating lymphocyte (TIL) 1290 in the context of HLA-A24.</text>
</comment>
<comment type="similarity">
    <text evidence="11">Belongs to the bacterial ribosomal protein bL28 family.</text>
</comment>
<comment type="sequence caution" evidence="11">
    <conflict type="erroneous initiation">
        <sequence resource="EMBL-CDS" id="AAC50181"/>
    </conflict>
</comment>
<comment type="sequence caution" evidence="11">
    <conflict type="erroneous gene model prediction">
        <sequence resource="EMBL-CDS" id="AAK61226"/>
    </conflict>
</comment>
<proteinExistence type="evidence at protein level"/>
<accession>Q13084</accession>
<accession>B2RCM4</accession>
<accession>D3DU46</accession>
<accession>Q4TT39</accession>
<accession>Q96S26</accession>
<accession>Q9BQD8</accession>
<accession>Q9BR04</accession>
<feature type="transit peptide" description="Mitochondrion" evidence="1">
    <location>
        <begin position="1"/>
        <end position="55"/>
    </location>
</feature>
<feature type="chain" id="PRO_0000030506" description="Large ribosomal subunit protein bL28m">
    <location>
        <begin position="56"/>
        <end position="256"/>
    </location>
</feature>
<feature type="sequence variant" id="VAR_054219" description="In dbSNP:rs3194151." evidence="4 5">
    <original>H</original>
    <variation>Y</variation>
    <location>
        <position position="27"/>
    </location>
</feature>
<feature type="sequence variant" id="VAR_052024" description="In dbSNP:rs11557302." evidence="9">
    <original>D</original>
    <variation>E</variation>
    <location>
        <position position="160"/>
    </location>
</feature>
<feature type="sequence variant" id="VAR_061806" description="In dbSNP:rs13226.">
    <original>Y</original>
    <variation>C</variation>
    <location>
        <position position="230"/>
    </location>
</feature>
<feature type="sequence conflict" description="In Ref. 2; AAK61226." evidence="11" ref="2">
    <original>K</original>
    <variation>KASG</variation>
    <location>
        <position position="147"/>
    </location>
</feature>
<feature type="sequence conflict" description="In Ref. 4." evidence="11" ref="4">
    <original>TPK</original>
    <variation>ASG</variation>
    <location>
        <begin position="148"/>
        <end position="150"/>
    </location>
</feature>
<feature type="sequence conflict" description="In Ref. 6; AAC50181." evidence="11" ref="6">
    <original>R</original>
    <variation>T</variation>
    <location>
        <position position="252"/>
    </location>
</feature>
<feature type="helix" evidence="18">
    <location>
        <begin position="8"/>
        <end position="10"/>
    </location>
</feature>
<feature type="helix" evidence="18">
    <location>
        <begin position="11"/>
        <end position="16"/>
    </location>
</feature>
<feature type="helix" evidence="18">
    <location>
        <begin position="20"/>
        <end position="23"/>
    </location>
</feature>
<feature type="helix" evidence="18">
    <location>
        <begin position="26"/>
        <end position="33"/>
    </location>
</feature>
<feature type="strand" evidence="20">
    <location>
        <begin position="41"/>
        <end position="43"/>
    </location>
</feature>
<feature type="strand" evidence="18">
    <location>
        <begin position="47"/>
        <end position="52"/>
    </location>
</feature>
<feature type="turn" evidence="18">
    <location>
        <begin position="54"/>
        <end position="56"/>
    </location>
</feature>
<feature type="strand" evidence="18">
    <location>
        <begin position="59"/>
        <end position="61"/>
    </location>
</feature>
<feature type="helix" evidence="18">
    <location>
        <begin position="73"/>
        <end position="77"/>
    </location>
</feature>
<feature type="strand" evidence="18">
    <location>
        <begin position="85"/>
        <end position="91"/>
    </location>
</feature>
<feature type="helix" evidence="18">
    <location>
        <begin position="92"/>
        <end position="94"/>
    </location>
</feature>
<feature type="strand" evidence="18">
    <location>
        <begin position="100"/>
        <end position="105"/>
    </location>
</feature>
<feature type="strand" evidence="18">
    <location>
        <begin position="109"/>
        <end position="116"/>
    </location>
</feature>
<feature type="turn" evidence="18">
    <location>
        <begin position="117"/>
        <end position="120"/>
    </location>
</feature>
<feature type="strand" evidence="18">
    <location>
        <begin position="121"/>
        <end position="128"/>
    </location>
</feature>
<feature type="helix" evidence="18">
    <location>
        <begin position="129"/>
        <end position="138"/>
    </location>
</feature>
<feature type="helix" evidence="18">
    <location>
        <begin position="141"/>
        <end position="147"/>
    </location>
</feature>
<feature type="helix" evidence="18">
    <location>
        <begin position="150"/>
        <end position="153"/>
    </location>
</feature>
<feature type="helix" evidence="18">
    <location>
        <begin position="156"/>
        <end position="171"/>
    </location>
</feature>
<feature type="helix" evidence="19">
    <location>
        <begin position="174"/>
        <end position="176"/>
    </location>
</feature>
<feature type="helix" evidence="18">
    <location>
        <begin position="181"/>
        <end position="190"/>
    </location>
</feature>
<feature type="helix" evidence="18">
    <location>
        <begin position="192"/>
        <end position="194"/>
    </location>
</feature>
<feature type="helix" evidence="18">
    <location>
        <begin position="198"/>
        <end position="201"/>
    </location>
</feature>
<feature type="turn" evidence="18">
    <location>
        <begin position="202"/>
        <end position="205"/>
    </location>
</feature>
<feature type="helix" evidence="18">
    <location>
        <begin position="208"/>
        <end position="219"/>
    </location>
</feature>
<feature type="helix" evidence="18">
    <location>
        <begin position="226"/>
        <end position="243"/>
    </location>
</feature>
<evidence type="ECO:0000250" key="1"/>
<evidence type="ECO:0000250" key="2">
    <source>
        <dbReference type="UniProtKB" id="Q2HJJ1"/>
    </source>
</evidence>
<evidence type="ECO:0000269" key="3">
    <source>
    </source>
</evidence>
<evidence type="ECO:0000269" key="4">
    <source>
    </source>
</evidence>
<evidence type="ECO:0000269" key="5">
    <source>
    </source>
</evidence>
<evidence type="ECO:0000269" key="6">
    <source>
    </source>
</evidence>
<evidence type="ECO:0000269" key="7">
    <source>
    </source>
</evidence>
<evidence type="ECO:0000269" key="8">
    <source>
    </source>
</evidence>
<evidence type="ECO:0000269" key="9">
    <source>
    </source>
</evidence>
<evidence type="ECO:0000303" key="10">
    <source>
    </source>
</evidence>
<evidence type="ECO:0000305" key="11"/>
<evidence type="ECO:0000305" key="12">
    <source>
    </source>
</evidence>
<evidence type="ECO:0007744" key="13">
    <source>
        <dbReference type="PDB" id="3J7Y"/>
    </source>
</evidence>
<evidence type="ECO:0007744" key="14">
    <source>
        <dbReference type="PDB" id="5OOL"/>
    </source>
</evidence>
<evidence type="ECO:0007744" key="15">
    <source>
        <dbReference type="PDB" id="5OOM"/>
    </source>
</evidence>
<evidence type="ECO:0007744" key="16">
    <source>
        <dbReference type="PDB" id="7QH6"/>
    </source>
</evidence>
<evidence type="ECO:0007744" key="17">
    <source>
        <dbReference type="PDB" id="7QH7"/>
    </source>
</evidence>
<evidence type="ECO:0007829" key="18">
    <source>
        <dbReference type="PDB" id="7OF0"/>
    </source>
</evidence>
<evidence type="ECO:0007829" key="19">
    <source>
        <dbReference type="PDB" id="7QH6"/>
    </source>
</evidence>
<evidence type="ECO:0007829" key="20">
    <source>
        <dbReference type="PDB" id="8QU5"/>
    </source>
</evidence>
<protein>
    <recommendedName>
        <fullName evidence="10">Large ribosomal subunit protein bL28m</fullName>
    </recommendedName>
    <alternativeName>
        <fullName>39S ribosomal protein L28, mitochondrial</fullName>
        <shortName>L28mt</shortName>
        <shortName>MRP-L28</shortName>
    </alternativeName>
    <alternativeName>
        <fullName>Melanoma antigen p15</fullName>
    </alternativeName>
    <alternativeName>
        <fullName>Melanoma-associated antigen recognized by T-lymphocytes</fullName>
    </alternativeName>
</protein>
<sequence length="256" mass="30157">MPLHKYPVWLWKRLQLREGICSRLPGHYLRSLEEERTPTPVHYRPHGAKFKINPKNGQRERVEDVPIPIYFPPESQRGLWGGEGWILGQIYANNDKLSKRLKKVWKPQLFEREFYSEILDKKFTVTVTMRTLDLIDEAYGLDFYILKTPKEDLCSKFGMDLKRGMLLRLARQDPQLHPEDPERRAAIYDKYKEFAIPEEEAEWVGLTLEEAIEKQRLLEEKDPVPLFKIYVAELIQQLQQQALSEPAVVQKRASGQ</sequence>
<organism>
    <name type="scientific">Homo sapiens</name>
    <name type="common">Human</name>
    <dbReference type="NCBI Taxonomy" id="9606"/>
    <lineage>
        <taxon>Eukaryota</taxon>
        <taxon>Metazoa</taxon>
        <taxon>Chordata</taxon>
        <taxon>Craniata</taxon>
        <taxon>Vertebrata</taxon>
        <taxon>Euteleostomi</taxon>
        <taxon>Mammalia</taxon>
        <taxon>Eutheria</taxon>
        <taxon>Euarchontoglires</taxon>
        <taxon>Primates</taxon>
        <taxon>Haplorrhini</taxon>
        <taxon>Catarrhini</taxon>
        <taxon>Hominidae</taxon>
        <taxon>Homo</taxon>
    </lineage>
</organism>
<dbReference type="EMBL" id="AK315180">
    <property type="protein sequence ID" value="BAG37621.1"/>
    <property type="molecule type" value="mRNA"/>
</dbReference>
<dbReference type="EMBL" id="AE006463">
    <property type="protein sequence ID" value="AAK61226.1"/>
    <property type="status" value="ALT_SEQ"/>
    <property type="molecule type" value="Genomic_DNA"/>
</dbReference>
<dbReference type="EMBL" id="Z97634">
    <property type="status" value="NOT_ANNOTATED_CDS"/>
    <property type="molecule type" value="Genomic_DNA"/>
</dbReference>
<dbReference type="EMBL" id="CH471112">
    <property type="protein sequence ID" value="EAW85827.1"/>
    <property type="molecule type" value="Genomic_DNA"/>
</dbReference>
<dbReference type="EMBL" id="CH471112">
    <property type="protein sequence ID" value="EAW85829.1"/>
    <property type="molecule type" value="Genomic_DNA"/>
</dbReference>
<dbReference type="EMBL" id="CH471112">
    <property type="protein sequence ID" value="EAW85832.1"/>
    <property type="molecule type" value="Genomic_DNA"/>
</dbReference>
<dbReference type="EMBL" id="CH471112">
    <property type="protein sequence ID" value="EAW85834.1"/>
    <property type="molecule type" value="Genomic_DNA"/>
</dbReference>
<dbReference type="EMBL" id="BC000507">
    <property type="protein sequence ID" value="AAH00507.2"/>
    <property type="molecule type" value="mRNA"/>
</dbReference>
<dbReference type="EMBL" id="BC000990">
    <property type="protein sequence ID" value="AAH00990.2"/>
    <property type="molecule type" value="mRNA"/>
</dbReference>
<dbReference type="EMBL" id="U19796">
    <property type="protein sequence ID" value="AAC50181.1"/>
    <property type="status" value="ALT_INIT"/>
    <property type="molecule type" value="mRNA"/>
</dbReference>
<dbReference type="EMBL" id="BT009857">
    <property type="protein sequence ID" value="AAP88859.1"/>
    <property type="molecule type" value="mRNA"/>
</dbReference>
<dbReference type="CCDS" id="CCDS32349.1"/>
<dbReference type="RefSeq" id="NP_006419.2">
    <property type="nucleotide sequence ID" value="NM_006428.4"/>
</dbReference>
<dbReference type="RefSeq" id="XP_005255098.1">
    <property type="nucleotide sequence ID" value="XM_005255041.3"/>
</dbReference>
<dbReference type="RefSeq" id="XP_011520653.1">
    <property type="nucleotide sequence ID" value="XM_011522351.3"/>
</dbReference>
<dbReference type="RefSeq" id="XP_054235367.1">
    <property type="nucleotide sequence ID" value="XM_054379392.1"/>
</dbReference>
<dbReference type="PDB" id="3J7Y">
    <property type="method" value="EM"/>
    <property type="resolution" value="3.40 A"/>
    <property type="chains" value="X=1-256"/>
</dbReference>
<dbReference type="PDB" id="5OOL">
    <property type="method" value="EM"/>
    <property type="resolution" value="3.06 A"/>
    <property type="chains" value="X=1-256"/>
</dbReference>
<dbReference type="PDB" id="5OOM">
    <property type="method" value="EM"/>
    <property type="resolution" value="3.03 A"/>
    <property type="chains" value="X=1-256"/>
</dbReference>
<dbReference type="PDB" id="6I9R">
    <property type="method" value="EM"/>
    <property type="resolution" value="3.90 A"/>
    <property type="chains" value="X=1-256"/>
</dbReference>
<dbReference type="PDB" id="6NU2">
    <property type="method" value="EM"/>
    <property type="resolution" value="3.90 A"/>
    <property type="chains" value="X=2-244"/>
</dbReference>
<dbReference type="PDB" id="6NU3">
    <property type="method" value="EM"/>
    <property type="resolution" value="4.40 A"/>
    <property type="chains" value="X=2-244"/>
</dbReference>
<dbReference type="PDB" id="6VLZ">
    <property type="method" value="EM"/>
    <property type="resolution" value="2.97 A"/>
    <property type="chains" value="X=1-256"/>
</dbReference>
<dbReference type="PDB" id="6VMI">
    <property type="method" value="EM"/>
    <property type="resolution" value="2.96 A"/>
    <property type="chains" value="X=1-256"/>
</dbReference>
<dbReference type="PDB" id="6ZM5">
    <property type="method" value="EM"/>
    <property type="resolution" value="2.89 A"/>
    <property type="chains" value="X=1-256"/>
</dbReference>
<dbReference type="PDB" id="6ZM6">
    <property type="method" value="EM"/>
    <property type="resolution" value="2.59 A"/>
    <property type="chains" value="X=1-256"/>
</dbReference>
<dbReference type="PDB" id="6ZS9">
    <property type="method" value="EM"/>
    <property type="resolution" value="4.00 A"/>
    <property type="chains" value="XX=1-256"/>
</dbReference>
<dbReference type="PDB" id="6ZSA">
    <property type="method" value="EM"/>
    <property type="resolution" value="4.00 A"/>
    <property type="chains" value="XX=1-256"/>
</dbReference>
<dbReference type="PDB" id="6ZSB">
    <property type="method" value="EM"/>
    <property type="resolution" value="4.50 A"/>
    <property type="chains" value="XX=1-256"/>
</dbReference>
<dbReference type="PDB" id="6ZSC">
    <property type="method" value="EM"/>
    <property type="resolution" value="3.50 A"/>
    <property type="chains" value="XX=1-256"/>
</dbReference>
<dbReference type="PDB" id="6ZSD">
    <property type="method" value="EM"/>
    <property type="resolution" value="3.70 A"/>
    <property type="chains" value="XX=1-256"/>
</dbReference>
<dbReference type="PDB" id="6ZSE">
    <property type="method" value="EM"/>
    <property type="resolution" value="5.00 A"/>
    <property type="chains" value="XX=1-256"/>
</dbReference>
<dbReference type="PDB" id="6ZSG">
    <property type="method" value="EM"/>
    <property type="resolution" value="4.00 A"/>
    <property type="chains" value="XX=1-256"/>
</dbReference>
<dbReference type="PDB" id="7A5F">
    <property type="method" value="EM"/>
    <property type="resolution" value="4.40 A"/>
    <property type="chains" value="X3=1-256"/>
</dbReference>
<dbReference type="PDB" id="7A5G">
    <property type="method" value="EM"/>
    <property type="resolution" value="4.33 A"/>
    <property type="chains" value="X3=1-256"/>
</dbReference>
<dbReference type="PDB" id="7A5H">
    <property type="method" value="EM"/>
    <property type="resolution" value="3.30 A"/>
    <property type="chains" value="X=1-256"/>
</dbReference>
<dbReference type="PDB" id="7A5I">
    <property type="method" value="EM"/>
    <property type="resolution" value="3.70 A"/>
    <property type="chains" value="X3=1-256"/>
</dbReference>
<dbReference type="PDB" id="7A5J">
    <property type="method" value="EM"/>
    <property type="resolution" value="3.10 A"/>
    <property type="chains" value="X=1-256"/>
</dbReference>
<dbReference type="PDB" id="7A5K">
    <property type="method" value="EM"/>
    <property type="resolution" value="3.70 A"/>
    <property type="chains" value="X3=1-256"/>
</dbReference>
<dbReference type="PDB" id="7L08">
    <property type="method" value="EM"/>
    <property type="resolution" value="3.49 A"/>
    <property type="chains" value="X=1-256"/>
</dbReference>
<dbReference type="PDB" id="7L20">
    <property type="method" value="EM"/>
    <property type="resolution" value="3.15 A"/>
    <property type="chains" value="X=1-256"/>
</dbReference>
<dbReference type="PDB" id="7O9K">
    <property type="method" value="EM"/>
    <property type="resolution" value="3.10 A"/>
    <property type="chains" value="X=1-256"/>
</dbReference>
<dbReference type="PDB" id="7O9M">
    <property type="method" value="EM"/>
    <property type="resolution" value="2.50 A"/>
    <property type="chains" value="X=1-256"/>
</dbReference>
<dbReference type="PDB" id="7ODR">
    <property type="method" value="EM"/>
    <property type="resolution" value="2.90 A"/>
    <property type="chains" value="X=1-256"/>
</dbReference>
<dbReference type="PDB" id="7ODS">
    <property type="method" value="EM"/>
    <property type="resolution" value="3.10 A"/>
    <property type="chains" value="X=1-256"/>
</dbReference>
<dbReference type="PDB" id="7ODT">
    <property type="method" value="EM"/>
    <property type="resolution" value="3.10 A"/>
    <property type="chains" value="X=1-256"/>
</dbReference>
<dbReference type="PDB" id="7OF0">
    <property type="method" value="EM"/>
    <property type="resolution" value="2.20 A"/>
    <property type="chains" value="X=1-256"/>
</dbReference>
<dbReference type="PDB" id="7OF2">
    <property type="method" value="EM"/>
    <property type="resolution" value="2.70 A"/>
    <property type="chains" value="X=1-256"/>
</dbReference>
<dbReference type="PDB" id="7OF3">
    <property type="method" value="EM"/>
    <property type="resolution" value="2.70 A"/>
    <property type="chains" value="X=1-256"/>
</dbReference>
<dbReference type="PDB" id="7OF4">
    <property type="method" value="EM"/>
    <property type="resolution" value="2.70 A"/>
    <property type="chains" value="X=1-256"/>
</dbReference>
<dbReference type="PDB" id="7OF5">
    <property type="method" value="EM"/>
    <property type="resolution" value="2.90 A"/>
    <property type="chains" value="X=1-256"/>
</dbReference>
<dbReference type="PDB" id="7OF6">
    <property type="method" value="EM"/>
    <property type="resolution" value="2.60 A"/>
    <property type="chains" value="X=1-256"/>
</dbReference>
<dbReference type="PDB" id="7OF7">
    <property type="method" value="EM"/>
    <property type="resolution" value="2.50 A"/>
    <property type="chains" value="X=1-256"/>
</dbReference>
<dbReference type="PDB" id="7OG4">
    <property type="method" value="EM"/>
    <property type="resolution" value="3.80 A"/>
    <property type="chains" value="XX=1-256"/>
</dbReference>
<dbReference type="PDB" id="7OI6">
    <property type="method" value="EM"/>
    <property type="resolution" value="5.70 A"/>
    <property type="chains" value="X=1-256"/>
</dbReference>
<dbReference type="PDB" id="7OI7">
    <property type="method" value="EM"/>
    <property type="resolution" value="3.50 A"/>
    <property type="chains" value="X=1-256"/>
</dbReference>
<dbReference type="PDB" id="7OI8">
    <property type="method" value="EM"/>
    <property type="resolution" value="3.50 A"/>
    <property type="chains" value="X=1-256"/>
</dbReference>
<dbReference type="PDB" id="7OI9">
    <property type="method" value="EM"/>
    <property type="resolution" value="3.30 A"/>
    <property type="chains" value="X=1-256"/>
</dbReference>
<dbReference type="PDB" id="7OIA">
    <property type="method" value="EM"/>
    <property type="resolution" value="3.20 A"/>
    <property type="chains" value="X=1-256"/>
</dbReference>
<dbReference type="PDB" id="7OIB">
    <property type="method" value="EM"/>
    <property type="resolution" value="3.30 A"/>
    <property type="chains" value="X=1-256"/>
</dbReference>
<dbReference type="PDB" id="7OIC">
    <property type="method" value="EM"/>
    <property type="resolution" value="3.10 A"/>
    <property type="chains" value="X=1-256"/>
</dbReference>
<dbReference type="PDB" id="7OID">
    <property type="method" value="EM"/>
    <property type="resolution" value="3.70 A"/>
    <property type="chains" value="X=1-256"/>
</dbReference>
<dbReference type="PDB" id="7OIE">
    <property type="method" value="EM"/>
    <property type="resolution" value="3.50 A"/>
    <property type="chains" value="X=1-256"/>
</dbReference>
<dbReference type="PDB" id="7PD3">
    <property type="method" value="EM"/>
    <property type="resolution" value="3.40 A"/>
    <property type="chains" value="X=1-256"/>
</dbReference>
<dbReference type="PDB" id="7PO4">
    <property type="method" value="EM"/>
    <property type="resolution" value="2.56 A"/>
    <property type="chains" value="X=1-256"/>
</dbReference>
<dbReference type="PDB" id="7QH6">
    <property type="method" value="EM"/>
    <property type="resolution" value="3.08 A"/>
    <property type="chains" value="X=1-256"/>
</dbReference>
<dbReference type="PDB" id="7QH7">
    <property type="method" value="EM"/>
    <property type="resolution" value="2.89 A"/>
    <property type="chains" value="X=2-244"/>
</dbReference>
<dbReference type="PDB" id="7QI4">
    <property type="method" value="EM"/>
    <property type="resolution" value="2.21 A"/>
    <property type="chains" value="X=1-256"/>
</dbReference>
<dbReference type="PDB" id="7QI5">
    <property type="method" value="EM"/>
    <property type="resolution" value="2.63 A"/>
    <property type="chains" value="X=1-256"/>
</dbReference>
<dbReference type="PDB" id="7QI6">
    <property type="method" value="EM"/>
    <property type="resolution" value="2.98 A"/>
    <property type="chains" value="X=1-256"/>
</dbReference>
<dbReference type="PDB" id="8ANY">
    <property type="method" value="EM"/>
    <property type="resolution" value="2.85 A"/>
    <property type="chains" value="X=1-256"/>
</dbReference>
<dbReference type="PDB" id="8JAV">
    <property type="method" value="EM"/>
    <property type="resolution" value="3.44 A"/>
    <property type="chains" value="F/O/P/S=241-256"/>
</dbReference>
<dbReference type="PDB" id="8K2A">
    <property type="method" value="EM"/>
    <property type="resolution" value="2.90 A"/>
    <property type="chains" value="Lb=1-256"/>
</dbReference>
<dbReference type="PDB" id="8K2B">
    <property type="method" value="EM"/>
    <property type="resolution" value="3.40 A"/>
    <property type="chains" value="Lb=1-256"/>
</dbReference>
<dbReference type="PDB" id="8OIR">
    <property type="method" value="EM"/>
    <property type="resolution" value="3.10 A"/>
    <property type="chains" value="BE=1-256"/>
</dbReference>
<dbReference type="PDB" id="8OIT">
    <property type="method" value="EM"/>
    <property type="resolution" value="2.90 A"/>
    <property type="chains" value="BE=1-256"/>
</dbReference>
<dbReference type="PDB" id="8PK0">
    <property type="method" value="EM"/>
    <property type="resolution" value="3.03 A"/>
    <property type="chains" value="X=1-256"/>
</dbReference>
<dbReference type="PDB" id="8QSJ">
    <property type="method" value="EM"/>
    <property type="resolution" value="3.00 A"/>
    <property type="chains" value="X=1-256"/>
</dbReference>
<dbReference type="PDB" id="8QU1">
    <property type="method" value="EM"/>
    <property type="resolution" value="2.74 A"/>
    <property type="chains" value="X=1-256"/>
</dbReference>
<dbReference type="PDB" id="8QU5">
    <property type="method" value="EM"/>
    <property type="resolution" value="2.42 A"/>
    <property type="chains" value="X=1-256"/>
</dbReference>
<dbReference type="PDB" id="8RRI">
    <property type="method" value="EM"/>
    <property type="resolution" value="2.40 A"/>
    <property type="chains" value="X=1-256"/>
</dbReference>
<dbReference type="PDB" id="8XT0">
    <property type="method" value="EM"/>
    <property type="resolution" value="3.20 A"/>
    <property type="chains" value="Lb=1-256"/>
</dbReference>
<dbReference type="PDB" id="8XT1">
    <property type="method" value="EM"/>
    <property type="resolution" value="3.10 A"/>
    <property type="chains" value="Lb=1-256"/>
</dbReference>
<dbReference type="PDB" id="8XT2">
    <property type="method" value="EM"/>
    <property type="resolution" value="3.30 A"/>
    <property type="chains" value="Lb=1-256"/>
</dbReference>
<dbReference type="PDB" id="8XT3">
    <property type="method" value="EM"/>
    <property type="resolution" value="3.10 A"/>
    <property type="chains" value="Lb=1-256"/>
</dbReference>
<dbReference type="PDBsum" id="3J7Y"/>
<dbReference type="PDBsum" id="5OOL"/>
<dbReference type="PDBsum" id="5OOM"/>
<dbReference type="PDBsum" id="6I9R"/>
<dbReference type="PDBsum" id="6NU2"/>
<dbReference type="PDBsum" id="6NU3"/>
<dbReference type="PDBsum" id="6VLZ"/>
<dbReference type="PDBsum" id="6VMI"/>
<dbReference type="PDBsum" id="6ZM5"/>
<dbReference type="PDBsum" id="6ZM6"/>
<dbReference type="PDBsum" id="6ZS9"/>
<dbReference type="PDBsum" id="6ZSA"/>
<dbReference type="PDBsum" id="6ZSB"/>
<dbReference type="PDBsum" id="6ZSC"/>
<dbReference type="PDBsum" id="6ZSD"/>
<dbReference type="PDBsum" id="6ZSE"/>
<dbReference type="PDBsum" id="6ZSG"/>
<dbReference type="PDBsum" id="7A5F"/>
<dbReference type="PDBsum" id="7A5G"/>
<dbReference type="PDBsum" id="7A5H"/>
<dbReference type="PDBsum" id="7A5I"/>
<dbReference type="PDBsum" id="7A5J"/>
<dbReference type="PDBsum" id="7A5K"/>
<dbReference type="PDBsum" id="7L08"/>
<dbReference type="PDBsum" id="7L20"/>
<dbReference type="PDBsum" id="7O9K"/>
<dbReference type="PDBsum" id="7O9M"/>
<dbReference type="PDBsum" id="7ODR"/>
<dbReference type="PDBsum" id="7ODS"/>
<dbReference type="PDBsum" id="7ODT"/>
<dbReference type="PDBsum" id="7OF0"/>
<dbReference type="PDBsum" id="7OF2"/>
<dbReference type="PDBsum" id="7OF3"/>
<dbReference type="PDBsum" id="7OF4"/>
<dbReference type="PDBsum" id="7OF5"/>
<dbReference type="PDBsum" id="7OF6"/>
<dbReference type="PDBsum" id="7OF7"/>
<dbReference type="PDBsum" id="7OG4"/>
<dbReference type="PDBsum" id="7OI6"/>
<dbReference type="PDBsum" id="7OI7"/>
<dbReference type="PDBsum" id="7OI8"/>
<dbReference type="PDBsum" id="7OI9"/>
<dbReference type="PDBsum" id="7OIA"/>
<dbReference type="PDBsum" id="7OIB"/>
<dbReference type="PDBsum" id="7OIC"/>
<dbReference type="PDBsum" id="7OID"/>
<dbReference type="PDBsum" id="7OIE"/>
<dbReference type="PDBsum" id="7PD3"/>
<dbReference type="PDBsum" id="7PO4"/>
<dbReference type="PDBsum" id="7QH6"/>
<dbReference type="PDBsum" id="7QH7"/>
<dbReference type="PDBsum" id="7QI4"/>
<dbReference type="PDBsum" id="7QI5"/>
<dbReference type="PDBsum" id="7QI6"/>
<dbReference type="PDBsum" id="8ANY"/>
<dbReference type="PDBsum" id="8JAV"/>
<dbReference type="PDBsum" id="8K2A"/>
<dbReference type="PDBsum" id="8K2B"/>
<dbReference type="PDBsum" id="8OIR"/>
<dbReference type="PDBsum" id="8OIT"/>
<dbReference type="PDBsum" id="8PK0"/>
<dbReference type="PDBsum" id="8QSJ"/>
<dbReference type="PDBsum" id="8QU1"/>
<dbReference type="PDBsum" id="8QU5"/>
<dbReference type="PDBsum" id="8RRI"/>
<dbReference type="PDBsum" id="8XT0"/>
<dbReference type="PDBsum" id="8XT1"/>
<dbReference type="PDBsum" id="8XT2"/>
<dbReference type="PDBsum" id="8XT3"/>
<dbReference type="EMDB" id="EMD-0514"/>
<dbReference type="EMDB" id="EMD-0515"/>
<dbReference type="EMDB" id="EMD-11278"/>
<dbReference type="EMDB" id="EMD-11279"/>
<dbReference type="EMDB" id="EMD-11390"/>
<dbReference type="EMDB" id="EMD-11391"/>
<dbReference type="EMDB" id="EMD-11392"/>
<dbReference type="EMDB" id="EMD-11393"/>
<dbReference type="EMDB" id="EMD-11394"/>
<dbReference type="EMDB" id="EMD-11395"/>
<dbReference type="EMDB" id="EMD-11397"/>
<dbReference type="EMDB" id="EMD-11641"/>
<dbReference type="EMDB" id="EMD-11642"/>
<dbReference type="EMDB" id="EMD-11643"/>
<dbReference type="EMDB" id="EMD-11644"/>
<dbReference type="EMDB" id="EMD-11645"/>
<dbReference type="EMDB" id="EMD-11646"/>
<dbReference type="EMDB" id="EMD-12763"/>
<dbReference type="EMDB" id="EMD-12764"/>
<dbReference type="EMDB" id="EMD-12845"/>
<dbReference type="EMDB" id="EMD-12846"/>
<dbReference type="EMDB" id="EMD-12847"/>
<dbReference type="EMDB" id="EMD-12865"/>
<dbReference type="EMDB" id="EMD-12867"/>
<dbReference type="EMDB" id="EMD-12868"/>
<dbReference type="EMDB" id="EMD-12869"/>
<dbReference type="EMDB" id="EMD-12870"/>
<dbReference type="EMDB" id="EMD-12871"/>
<dbReference type="EMDB" id="EMD-12872"/>
<dbReference type="EMDB" id="EMD-12877"/>
<dbReference type="EMDB" id="EMD-12919"/>
<dbReference type="EMDB" id="EMD-12920"/>
<dbReference type="EMDB" id="EMD-12921"/>
<dbReference type="EMDB" id="EMD-12922"/>
<dbReference type="EMDB" id="EMD-12923"/>
<dbReference type="EMDB" id="EMD-12924"/>
<dbReference type="EMDB" id="EMD-12925"/>
<dbReference type="EMDB" id="EMD-12926"/>
<dbReference type="EMDB" id="EMD-12927"/>
<dbReference type="EMDB" id="EMD-13329"/>
<dbReference type="EMDB" id="EMD-13562"/>
<dbReference type="EMDB" id="EMD-13965"/>
<dbReference type="EMDB" id="EMD-13967"/>
<dbReference type="EMDB" id="EMD-13980"/>
<dbReference type="EMDB" id="EMD-13981"/>
<dbReference type="EMDB" id="EMD-13982"/>
<dbReference type="EMDB" id="EMD-15544"/>
<dbReference type="EMDB" id="EMD-16897"/>
<dbReference type="EMDB" id="EMD-16899"/>
<dbReference type="EMDB" id="EMD-17719"/>
<dbReference type="EMDB" id="EMD-19460"/>
<dbReference type="EMDB" id="EMD-21233"/>
<dbReference type="EMDB" id="EMD-21242"/>
<dbReference type="EMDB" id="EMD-23096"/>
<dbReference type="EMDB" id="EMD-23121"/>
<dbReference type="EMDB" id="EMD-36836"/>
<dbReference type="EMDB" id="EMD-36837"/>
<dbReference type="EMDB" id="EMD-3842"/>
<dbReference type="EMDB" id="EMD-3843"/>
<dbReference type="EMDB" id="EMD-38632"/>
<dbReference type="EMDB" id="EMD-38633"/>
<dbReference type="EMDB" id="EMD-38634"/>
<dbReference type="EMDB" id="EMD-38635"/>
<dbReference type="EMDB" id="EMD-4434"/>
<dbReference type="SMR" id="Q13084"/>
<dbReference type="BioGRID" id="115824">
    <property type="interactions" value="256"/>
</dbReference>
<dbReference type="ComplexPortal" id="CPX-5226">
    <property type="entry name" value="39S mitochondrial large ribosomal subunit"/>
</dbReference>
<dbReference type="CORUM" id="Q13084"/>
<dbReference type="DIP" id="DIP-61135N"/>
<dbReference type="FunCoup" id="Q13084">
    <property type="interactions" value="1806"/>
</dbReference>
<dbReference type="IntAct" id="Q13084">
    <property type="interactions" value="156"/>
</dbReference>
<dbReference type="MINT" id="Q13084"/>
<dbReference type="STRING" id="9606.ENSP00000497004"/>
<dbReference type="GlyGen" id="Q13084">
    <property type="glycosylation" value="1 site, 1 O-linked glycan (1 site)"/>
</dbReference>
<dbReference type="iPTMnet" id="Q13084"/>
<dbReference type="PhosphoSitePlus" id="Q13084"/>
<dbReference type="SwissPalm" id="Q13084"/>
<dbReference type="BioMuta" id="MRPL28"/>
<dbReference type="DMDM" id="85695426"/>
<dbReference type="jPOST" id="Q13084"/>
<dbReference type="MassIVE" id="Q13084"/>
<dbReference type="PaxDb" id="9606-ENSP00000199706"/>
<dbReference type="PeptideAtlas" id="Q13084"/>
<dbReference type="ProteomicsDB" id="59138"/>
<dbReference type="Pumba" id="Q13084"/>
<dbReference type="Antibodypedia" id="22648">
    <property type="antibodies" value="278 antibodies from 33 providers"/>
</dbReference>
<dbReference type="DNASU" id="10573"/>
<dbReference type="Ensembl" id="ENST00000199706.13">
    <property type="protein sequence ID" value="ENSP00000199706.7"/>
    <property type="gene ID" value="ENSG00000086504.18"/>
</dbReference>
<dbReference type="Ensembl" id="ENST00000389675.6">
    <property type="protein sequence ID" value="ENSP00000374326.2"/>
    <property type="gene ID" value="ENSG00000086504.18"/>
</dbReference>
<dbReference type="Ensembl" id="ENST00000648346.1">
    <property type="protein sequence ID" value="ENSP00000497004.1"/>
    <property type="gene ID" value="ENSG00000086504.18"/>
</dbReference>
<dbReference type="GeneID" id="10573"/>
<dbReference type="KEGG" id="hsa:10573"/>
<dbReference type="MANE-Select" id="ENST00000199706.13">
    <property type="protein sequence ID" value="ENSP00000199706.7"/>
    <property type="RefSeq nucleotide sequence ID" value="NM_006428.5"/>
    <property type="RefSeq protein sequence ID" value="NP_006419.2"/>
</dbReference>
<dbReference type="UCSC" id="uc002cgs.3">
    <property type="organism name" value="human"/>
</dbReference>
<dbReference type="AGR" id="HGNC:14484"/>
<dbReference type="CTD" id="10573"/>
<dbReference type="DisGeNET" id="10573"/>
<dbReference type="GeneCards" id="MRPL28"/>
<dbReference type="HGNC" id="HGNC:14484">
    <property type="gene designation" value="MRPL28"/>
</dbReference>
<dbReference type="HPA" id="ENSG00000086504">
    <property type="expression patterns" value="Low tissue specificity"/>
</dbReference>
<dbReference type="MIM" id="604853">
    <property type="type" value="gene"/>
</dbReference>
<dbReference type="neXtProt" id="NX_Q13084"/>
<dbReference type="PharmGKB" id="PA30515"/>
<dbReference type="VEuPathDB" id="HostDB:ENSG00000086504"/>
<dbReference type="eggNOG" id="KOG3279">
    <property type="taxonomic scope" value="Eukaryota"/>
</dbReference>
<dbReference type="GeneTree" id="ENSGT00390000017359"/>
<dbReference type="InParanoid" id="Q13084"/>
<dbReference type="OMA" id="KMSNRLK"/>
<dbReference type="OrthoDB" id="361870at2759"/>
<dbReference type="PAN-GO" id="Q13084">
    <property type="GO annotations" value="2 GO annotations based on evolutionary models"/>
</dbReference>
<dbReference type="PhylomeDB" id="Q13084"/>
<dbReference type="TreeFam" id="TF313040"/>
<dbReference type="PathwayCommons" id="Q13084"/>
<dbReference type="Reactome" id="R-HSA-5368286">
    <property type="pathway name" value="Mitochondrial translation initiation"/>
</dbReference>
<dbReference type="Reactome" id="R-HSA-5389840">
    <property type="pathway name" value="Mitochondrial translation elongation"/>
</dbReference>
<dbReference type="Reactome" id="R-HSA-5419276">
    <property type="pathway name" value="Mitochondrial translation termination"/>
</dbReference>
<dbReference type="SignaLink" id="Q13084"/>
<dbReference type="SIGNOR" id="Q13084"/>
<dbReference type="BioGRID-ORCS" id="10573">
    <property type="hits" value="435 hits in 1159 CRISPR screens"/>
</dbReference>
<dbReference type="ChiTaRS" id="MRPL28">
    <property type="organism name" value="human"/>
</dbReference>
<dbReference type="EvolutionaryTrace" id="Q13084"/>
<dbReference type="GeneWiki" id="MRPL28"/>
<dbReference type="GenomeRNAi" id="10573"/>
<dbReference type="Pharos" id="Q13084">
    <property type="development level" value="Tbio"/>
</dbReference>
<dbReference type="PRO" id="PR:Q13084"/>
<dbReference type="Proteomes" id="UP000005640">
    <property type="component" value="Chromosome 16"/>
</dbReference>
<dbReference type="RNAct" id="Q13084">
    <property type="molecule type" value="protein"/>
</dbReference>
<dbReference type="Bgee" id="ENSG00000086504">
    <property type="expression patterns" value="Expressed in apex of heart and 199 other cell types or tissues"/>
</dbReference>
<dbReference type="ExpressionAtlas" id="Q13084">
    <property type="expression patterns" value="baseline and differential"/>
</dbReference>
<dbReference type="GO" id="GO:0005829">
    <property type="term" value="C:cytosol"/>
    <property type="evidence" value="ECO:0000314"/>
    <property type="project" value="HPA"/>
</dbReference>
<dbReference type="GO" id="GO:0005743">
    <property type="term" value="C:mitochondrial inner membrane"/>
    <property type="evidence" value="ECO:0000304"/>
    <property type="project" value="Reactome"/>
</dbReference>
<dbReference type="GO" id="GO:0005762">
    <property type="term" value="C:mitochondrial large ribosomal subunit"/>
    <property type="evidence" value="ECO:0000314"/>
    <property type="project" value="UniProtKB"/>
</dbReference>
<dbReference type="GO" id="GO:0005761">
    <property type="term" value="C:mitochondrial ribosome"/>
    <property type="evidence" value="ECO:0000314"/>
    <property type="project" value="UniProtKB"/>
</dbReference>
<dbReference type="GO" id="GO:0005739">
    <property type="term" value="C:mitochondrion"/>
    <property type="evidence" value="ECO:0000314"/>
    <property type="project" value="UniProtKB"/>
</dbReference>
<dbReference type="GO" id="GO:0003723">
    <property type="term" value="F:RNA binding"/>
    <property type="evidence" value="ECO:0007005"/>
    <property type="project" value="UniProtKB"/>
</dbReference>
<dbReference type="GO" id="GO:0003735">
    <property type="term" value="F:structural constituent of ribosome"/>
    <property type="evidence" value="ECO:0000318"/>
    <property type="project" value="GO_Central"/>
</dbReference>
<dbReference type="GO" id="GO:0032543">
    <property type="term" value="P:mitochondrial translation"/>
    <property type="evidence" value="ECO:0000303"/>
    <property type="project" value="ComplexPortal"/>
</dbReference>
<dbReference type="GO" id="GO:0006412">
    <property type="term" value="P:translation"/>
    <property type="evidence" value="ECO:0000303"/>
    <property type="project" value="UniProtKB"/>
</dbReference>
<dbReference type="Gene3D" id="2.30.170.40">
    <property type="entry name" value="Ribosomal protein L28/L24"/>
    <property type="match status" value="1"/>
</dbReference>
<dbReference type="InterPro" id="IPR026569">
    <property type="entry name" value="Ribosomal_bL28"/>
</dbReference>
<dbReference type="InterPro" id="IPR034704">
    <property type="entry name" value="Ribosomal_bL28/bL31-like_sf"/>
</dbReference>
<dbReference type="InterPro" id="IPR037147">
    <property type="entry name" value="Ribosomal_bL28_sf"/>
</dbReference>
<dbReference type="PANTHER" id="PTHR13528">
    <property type="entry name" value="39S RIBOSOMAL PROTEIN L28, MITOCHONDRIAL"/>
    <property type="match status" value="1"/>
</dbReference>
<dbReference type="PANTHER" id="PTHR13528:SF2">
    <property type="entry name" value="LARGE RIBOSOMAL SUBUNIT PROTEIN BL28M"/>
    <property type="match status" value="1"/>
</dbReference>
<dbReference type="Pfam" id="PF00830">
    <property type="entry name" value="Ribosomal_L28"/>
    <property type="match status" value="1"/>
</dbReference>
<dbReference type="SUPFAM" id="SSF143800">
    <property type="entry name" value="L28p-like"/>
    <property type="match status" value="1"/>
</dbReference>
<name>RM28_HUMAN</name>
<gene>
    <name type="primary">MRPL28</name>
    <name type="synonym">MAAT1</name>
</gene>
<keyword id="KW-0002">3D-structure</keyword>
<keyword id="KW-0496">Mitochondrion</keyword>
<keyword id="KW-1267">Proteomics identification</keyword>
<keyword id="KW-1185">Reference proteome</keyword>
<keyword id="KW-0687">Ribonucleoprotein</keyword>
<keyword id="KW-0689">Ribosomal protein</keyword>
<keyword id="KW-0809">Transit peptide</keyword>
<reference key="1">
    <citation type="journal article" date="2004" name="Nat. Genet.">
        <title>Complete sequencing and characterization of 21,243 full-length human cDNAs.</title>
        <authorList>
            <person name="Ota T."/>
            <person name="Suzuki Y."/>
            <person name="Nishikawa T."/>
            <person name="Otsuki T."/>
            <person name="Sugiyama T."/>
            <person name="Irie R."/>
            <person name="Wakamatsu A."/>
            <person name="Hayashi K."/>
            <person name="Sato H."/>
            <person name="Nagai K."/>
            <person name="Kimura K."/>
            <person name="Makita H."/>
            <person name="Sekine M."/>
            <person name="Obayashi M."/>
            <person name="Nishi T."/>
            <person name="Shibahara T."/>
            <person name="Tanaka T."/>
            <person name="Ishii S."/>
            <person name="Yamamoto J."/>
            <person name="Saito K."/>
            <person name="Kawai Y."/>
            <person name="Isono Y."/>
            <person name="Nakamura Y."/>
            <person name="Nagahari K."/>
            <person name="Murakami K."/>
            <person name="Yasuda T."/>
            <person name="Iwayanagi T."/>
            <person name="Wagatsuma M."/>
            <person name="Shiratori A."/>
            <person name="Sudo H."/>
            <person name="Hosoiri T."/>
            <person name="Kaku Y."/>
            <person name="Kodaira H."/>
            <person name="Kondo H."/>
            <person name="Sugawara M."/>
            <person name="Takahashi M."/>
            <person name="Kanda K."/>
            <person name="Yokoi T."/>
            <person name="Furuya T."/>
            <person name="Kikkawa E."/>
            <person name="Omura Y."/>
            <person name="Abe K."/>
            <person name="Kamihara K."/>
            <person name="Katsuta N."/>
            <person name="Sato K."/>
            <person name="Tanikawa M."/>
            <person name="Yamazaki M."/>
            <person name="Ninomiya K."/>
            <person name="Ishibashi T."/>
            <person name="Yamashita H."/>
            <person name="Murakawa K."/>
            <person name="Fujimori K."/>
            <person name="Tanai H."/>
            <person name="Kimata M."/>
            <person name="Watanabe M."/>
            <person name="Hiraoka S."/>
            <person name="Chiba Y."/>
            <person name="Ishida S."/>
            <person name="Ono Y."/>
            <person name="Takiguchi S."/>
            <person name="Watanabe S."/>
            <person name="Yosida M."/>
            <person name="Hotuta T."/>
            <person name="Kusano J."/>
            <person name="Kanehori K."/>
            <person name="Takahashi-Fujii A."/>
            <person name="Hara H."/>
            <person name="Tanase T.-O."/>
            <person name="Nomura Y."/>
            <person name="Togiya S."/>
            <person name="Komai F."/>
            <person name="Hara R."/>
            <person name="Takeuchi K."/>
            <person name="Arita M."/>
            <person name="Imose N."/>
            <person name="Musashino K."/>
            <person name="Yuuki H."/>
            <person name="Oshima A."/>
            <person name="Sasaki N."/>
            <person name="Aotsuka S."/>
            <person name="Yoshikawa Y."/>
            <person name="Matsunawa H."/>
            <person name="Ichihara T."/>
            <person name="Shiohata N."/>
            <person name="Sano S."/>
            <person name="Moriya S."/>
            <person name="Momiyama H."/>
            <person name="Satoh N."/>
            <person name="Takami S."/>
            <person name="Terashima Y."/>
            <person name="Suzuki O."/>
            <person name="Nakagawa S."/>
            <person name="Senoh A."/>
            <person name="Mizoguchi H."/>
            <person name="Goto Y."/>
            <person name="Shimizu F."/>
            <person name="Wakebe H."/>
            <person name="Hishigaki H."/>
            <person name="Watanabe T."/>
            <person name="Sugiyama A."/>
            <person name="Takemoto M."/>
            <person name="Kawakami B."/>
            <person name="Yamazaki M."/>
            <person name="Watanabe K."/>
            <person name="Kumagai A."/>
            <person name="Itakura S."/>
            <person name="Fukuzumi Y."/>
            <person name="Fujimori Y."/>
            <person name="Komiyama M."/>
            <person name="Tashiro H."/>
            <person name="Tanigami A."/>
            <person name="Fujiwara T."/>
            <person name="Ono T."/>
            <person name="Yamada K."/>
            <person name="Fujii Y."/>
            <person name="Ozaki K."/>
            <person name="Hirao M."/>
            <person name="Ohmori Y."/>
            <person name="Kawabata A."/>
            <person name="Hikiji T."/>
            <person name="Kobatake N."/>
            <person name="Inagaki H."/>
            <person name="Ikema Y."/>
            <person name="Okamoto S."/>
            <person name="Okitani R."/>
            <person name="Kawakami T."/>
            <person name="Noguchi S."/>
            <person name="Itoh T."/>
            <person name="Shigeta K."/>
            <person name="Senba T."/>
            <person name="Matsumura K."/>
            <person name="Nakajima Y."/>
            <person name="Mizuno T."/>
            <person name="Morinaga M."/>
            <person name="Sasaki M."/>
            <person name="Togashi T."/>
            <person name="Oyama M."/>
            <person name="Hata H."/>
            <person name="Watanabe M."/>
            <person name="Komatsu T."/>
            <person name="Mizushima-Sugano J."/>
            <person name="Satoh T."/>
            <person name="Shirai Y."/>
            <person name="Takahashi Y."/>
            <person name="Nakagawa K."/>
            <person name="Okumura K."/>
            <person name="Nagase T."/>
            <person name="Nomura N."/>
            <person name="Kikuchi H."/>
            <person name="Masuho Y."/>
            <person name="Yamashita R."/>
            <person name="Nakai K."/>
            <person name="Yada T."/>
            <person name="Nakamura Y."/>
            <person name="Ohara O."/>
            <person name="Isogai T."/>
            <person name="Sugano S."/>
        </authorList>
    </citation>
    <scope>NUCLEOTIDE SEQUENCE [LARGE SCALE MRNA]</scope>
    <scope>VARIANT TYR-27</scope>
    <source>
        <tissue>Skeletal muscle</tissue>
    </source>
</reference>
<reference key="2">
    <citation type="journal article" date="2001" name="Hum. Mol. Genet.">
        <title>Sequence, structure and pathology of the fully annotated terminal 2 Mb of the short arm of human chromosome 16.</title>
        <authorList>
            <person name="Daniels R.J."/>
            <person name="Peden J.F."/>
            <person name="Lloyd C."/>
            <person name="Horsley S.W."/>
            <person name="Clark K."/>
            <person name="Tufarelli C."/>
            <person name="Kearney L."/>
            <person name="Buckle V.J."/>
            <person name="Doggett N.A."/>
            <person name="Flint J."/>
            <person name="Higgs D.R."/>
        </authorList>
    </citation>
    <scope>NUCLEOTIDE SEQUENCE [LARGE SCALE GENOMIC DNA]</scope>
</reference>
<reference key="3">
    <citation type="submission" date="2005-09" db="EMBL/GenBank/DDBJ databases">
        <authorList>
            <person name="Mural R.J."/>
            <person name="Istrail S."/>
            <person name="Sutton G.G."/>
            <person name="Florea L."/>
            <person name="Halpern A.L."/>
            <person name="Mobarry C.M."/>
            <person name="Lippert R."/>
            <person name="Walenz B."/>
            <person name="Shatkay H."/>
            <person name="Dew I."/>
            <person name="Miller J.R."/>
            <person name="Flanigan M.J."/>
            <person name="Edwards N.J."/>
            <person name="Bolanos R."/>
            <person name="Fasulo D."/>
            <person name="Halldorsson B.V."/>
            <person name="Hannenhalli S."/>
            <person name="Turner R."/>
            <person name="Yooseph S."/>
            <person name="Lu F."/>
            <person name="Nusskern D.R."/>
            <person name="Shue B.C."/>
            <person name="Zheng X.H."/>
            <person name="Zhong F."/>
            <person name="Delcher A.L."/>
            <person name="Huson D.H."/>
            <person name="Kravitz S.A."/>
            <person name="Mouchard L."/>
            <person name="Reinert K."/>
            <person name="Remington K.A."/>
            <person name="Clark A.G."/>
            <person name="Waterman M.S."/>
            <person name="Eichler E.E."/>
            <person name="Adams M.D."/>
            <person name="Hunkapiller M.W."/>
            <person name="Myers E.W."/>
            <person name="Venter J.C."/>
        </authorList>
    </citation>
    <scope>NUCLEOTIDE SEQUENCE [LARGE SCALE GENOMIC DNA]</scope>
</reference>
<reference key="4">
    <citation type="journal article" date="2004" name="Nature">
        <title>The sequence and analysis of duplication-rich human chromosome 16.</title>
        <authorList>
            <person name="Martin J."/>
            <person name="Han C."/>
            <person name="Gordon L.A."/>
            <person name="Terry A."/>
            <person name="Prabhakar S."/>
            <person name="She X."/>
            <person name="Xie G."/>
            <person name="Hellsten U."/>
            <person name="Chan Y.M."/>
            <person name="Altherr M."/>
            <person name="Couronne O."/>
            <person name="Aerts A."/>
            <person name="Bajorek E."/>
            <person name="Black S."/>
            <person name="Blumer H."/>
            <person name="Branscomb E."/>
            <person name="Brown N.C."/>
            <person name="Bruno W.J."/>
            <person name="Buckingham J.M."/>
            <person name="Callen D.F."/>
            <person name="Campbell C.S."/>
            <person name="Campbell M.L."/>
            <person name="Campbell E.W."/>
            <person name="Caoile C."/>
            <person name="Challacombe J.F."/>
            <person name="Chasteen L.A."/>
            <person name="Chertkov O."/>
            <person name="Chi H.C."/>
            <person name="Christensen M."/>
            <person name="Clark L.M."/>
            <person name="Cohn J.D."/>
            <person name="Denys M."/>
            <person name="Detter J.C."/>
            <person name="Dickson M."/>
            <person name="Dimitrijevic-Bussod M."/>
            <person name="Escobar J."/>
            <person name="Fawcett J.J."/>
            <person name="Flowers D."/>
            <person name="Fotopulos D."/>
            <person name="Glavina T."/>
            <person name="Gomez M."/>
            <person name="Gonzales E."/>
            <person name="Goodstein D."/>
            <person name="Goodwin L.A."/>
            <person name="Grady D.L."/>
            <person name="Grigoriev I."/>
            <person name="Groza M."/>
            <person name="Hammon N."/>
            <person name="Hawkins T."/>
            <person name="Haydu L."/>
            <person name="Hildebrand C.E."/>
            <person name="Huang W."/>
            <person name="Israni S."/>
            <person name="Jett J."/>
            <person name="Jewett P.B."/>
            <person name="Kadner K."/>
            <person name="Kimball H."/>
            <person name="Kobayashi A."/>
            <person name="Krawczyk M.-C."/>
            <person name="Leyba T."/>
            <person name="Longmire J.L."/>
            <person name="Lopez F."/>
            <person name="Lou Y."/>
            <person name="Lowry S."/>
            <person name="Ludeman T."/>
            <person name="Manohar C.F."/>
            <person name="Mark G.A."/>
            <person name="McMurray K.L."/>
            <person name="Meincke L.J."/>
            <person name="Morgan J."/>
            <person name="Moyzis R.K."/>
            <person name="Mundt M.O."/>
            <person name="Munk A.C."/>
            <person name="Nandkeshwar R.D."/>
            <person name="Pitluck S."/>
            <person name="Pollard M."/>
            <person name="Predki P."/>
            <person name="Parson-Quintana B."/>
            <person name="Ramirez L."/>
            <person name="Rash S."/>
            <person name="Retterer J."/>
            <person name="Ricke D.O."/>
            <person name="Robinson D.L."/>
            <person name="Rodriguez A."/>
            <person name="Salamov A."/>
            <person name="Saunders E.H."/>
            <person name="Scott D."/>
            <person name="Shough T."/>
            <person name="Stallings R.L."/>
            <person name="Stalvey M."/>
            <person name="Sutherland R.D."/>
            <person name="Tapia R."/>
            <person name="Tesmer J.G."/>
            <person name="Thayer N."/>
            <person name="Thompson L.S."/>
            <person name="Tice H."/>
            <person name="Torney D.C."/>
            <person name="Tran-Gyamfi M."/>
            <person name="Tsai M."/>
            <person name="Ulanovsky L.E."/>
            <person name="Ustaszewska A."/>
            <person name="Vo N."/>
            <person name="White P.S."/>
            <person name="Williams A.L."/>
            <person name="Wills P.L."/>
            <person name="Wu J.-R."/>
            <person name="Wu K."/>
            <person name="Yang J."/>
            <person name="DeJong P."/>
            <person name="Bruce D."/>
            <person name="Doggett N.A."/>
            <person name="Deaven L."/>
            <person name="Schmutz J."/>
            <person name="Grimwood J."/>
            <person name="Richardson P."/>
            <person name="Rokhsar D.S."/>
            <person name="Eichler E.E."/>
            <person name="Gilna P."/>
            <person name="Lucas S.M."/>
            <person name="Myers R.M."/>
            <person name="Rubin E.M."/>
            <person name="Pennacchio L.A."/>
        </authorList>
    </citation>
    <scope>NUCLEOTIDE SEQUENCE [LARGE SCALE GENOMIC DNA]</scope>
</reference>
<reference key="5">
    <citation type="journal article" date="2004" name="Genome Res.">
        <title>The status, quality, and expansion of the NIH full-length cDNA project: the Mammalian Gene Collection (MGC).</title>
        <authorList>
            <consortium name="The MGC Project Team"/>
        </authorList>
    </citation>
    <scope>NUCLEOTIDE SEQUENCE [LARGE SCALE MRNA]</scope>
    <scope>VARIANT TYR-27</scope>
    <source>
        <tissue>Lung</tissue>
        <tissue>Placenta</tissue>
    </source>
</reference>
<reference key="6">
    <citation type="journal article" date="1995" name="J. Immunol.">
        <title>Cloning of a new gene encoding an antigen recognized by melanoma-specific HLA-A24-restricted tumor-infiltrating lymphocytes.</title>
        <authorList>
            <person name="Robbins P.F."/>
            <person name="El-Gamil M."/>
            <person name="Li Y.F."/>
            <person name="Topalian S.L."/>
            <person name="Rivoltini L."/>
            <person name="Sakaguchi K."/>
            <person name="Appella E."/>
            <person name="Kawakami Y."/>
            <person name="Rosenberg S.A."/>
        </authorList>
    </citation>
    <scope>NUCLEOTIDE SEQUENCE [MRNA] OF 82-256</scope>
    <scope>SYNTHESIS OF 137-146</scope>
    <scope>VARIANT GLU-160</scope>
    <source>
        <tissue>Melanoma</tissue>
    </source>
</reference>
<reference key="7">
    <citation type="submission" date="2003-08" db="EMBL/GenBank/DDBJ databases">
        <title>Cloning of human full-length CDSs in BD Creator(TM) system donor vector.</title>
        <authorList>
            <person name="Kalnine N."/>
            <person name="Chen X."/>
            <person name="Rolfs A."/>
            <person name="Halleck A."/>
            <person name="Hines L."/>
            <person name="Eisenstein S."/>
            <person name="Koundinya M."/>
            <person name="Raphael J."/>
            <person name="Moreira D."/>
            <person name="Kelley T."/>
            <person name="LaBaer J."/>
            <person name="Lin Y."/>
            <person name="Phelan M."/>
            <person name="Farmer A."/>
        </authorList>
    </citation>
    <scope>NUCLEOTIDE SEQUENCE [LARGE SCALE MRNA] OF 129-256</scope>
</reference>
<reference key="8">
    <citation type="journal article" date="2001" name="J. Biol. Chem.">
        <title>The large subunit of the mammalian mitochondrial ribosome. Analysis of the complement of ribosomal proteins present.</title>
        <authorList>
            <person name="Koc E.C."/>
            <person name="Burkhart W."/>
            <person name="Blackburn K."/>
            <person name="Moyer M.B."/>
            <person name="Schlatzer D.M."/>
            <person name="Moseley A."/>
            <person name="Spremulli L.L."/>
        </authorList>
    </citation>
    <scope>IDENTIFICATION</scope>
</reference>
<reference key="9">
    <citation type="journal article" date="2011" name="BMC Syst. Biol.">
        <title>Initial characterization of the human central proteome.</title>
        <authorList>
            <person name="Burkard T.R."/>
            <person name="Planyavsky M."/>
            <person name="Kaupe I."/>
            <person name="Breitwieser F.P."/>
            <person name="Buerckstuemmer T."/>
            <person name="Bennett K.L."/>
            <person name="Superti-Furga G."/>
            <person name="Colinge J."/>
        </authorList>
    </citation>
    <scope>IDENTIFICATION BY MASS SPECTROMETRY [LARGE SCALE ANALYSIS]</scope>
</reference>
<reference key="10">
    <citation type="journal article" date="2015" name="Proteomics">
        <title>N-terminome analysis of the human mitochondrial proteome.</title>
        <authorList>
            <person name="Vaca Jacome A.S."/>
            <person name="Rabilloud T."/>
            <person name="Schaeffer-Reiss C."/>
            <person name="Rompais M."/>
            <person name="Ayoub D."/>
            <person name="Lane L."/>
            <person name="Bairoch A."/>
            <person name="Van Dorsselaer A."/>
            <person name="Carapito C."/>
        </authorList>
    </citation>
    <scope>IDENTIFICATION BY MASS SPECTROMETRY [LARGE SCALE ANALYSIS]</scope>
</reference>
<reference evidence="13" key="11">
    <citation type="journal article" date="2014" name="Science">
        <title>Structure of the large ribosomal subunit from human mitochondria.</title>
        <authorList>
            <person name="Brown A."/>
            <person name="Amunts A."/>
            <person name="Bai X.C."/>
            <person name="Sugimoto Y."/>
            <person name="Edwards P.C."/>
            <person name="Murshudov G."/>
            <person name="Scheres S.H."/>
            <person name="Ramakrishnan V."/>
        </authorList>
    </citation>
    <scope>STRUCTURE BY ELECTRON MICROSCOPY (3.40 ANGSTROMS)</scope>
    <scope>SUBCELLULAR LOCATION</scope>
    <scope>SUBUNIT</scope>
</reference>
<reference evidence="14 15" key="12">
    <citation type="journal article" date="2017" name="Nat. Struct. Mol. Biol.">
        <title>Structures of the human mitochondrial ribosome in native states of assembly.</title>
        <authorList>
            <person name="Brown A."/>
            <person name="Rathore S."/>
            <person name="Kimanius D."/>
            <person name="Aibara S."/>
            <person name="Bai X.C."/>
            <person name="Rorbach J."/>
            <person name="Amunts A."/>
            <person name="Ramakrishnan V."/>
        </authorList>
    </citation>
    <scope>STRUCTURE BY ELECTRON MICROSCOPY (3.03 ANGSTROMS)</scope>
    <scope>SUBCELLULAR LOCATION</scope>
    <scope>SUBUNIT</scope>
</reference>
<reference evidence="16 17" key="13">
    <citation type="journal article" date="2022" name="Nat. Commun.">
        <title>A late-stage assembly checkpoint of the human mitochondrial ribosome large subunit.</title>
        <authorList>
            <person name="Rebelo-Guiomar P."/>
            <person name="Pellegrino S."/>
            <person name="Dent K.C."/>
            <person name="Sas-Chen A."/>
            <person name="Miller-Fleming L."/>
            <person name="Garone C."/>
            <person name="Van Haute L."/>
            <person name="Rogan J.F."/>
            <person name="Dinan A."/>
            <person name="Firth A.E."/>
            <person name="Andrews B."/>
            <person name="Whitworth A.J."/>
            <person name="Schwartz S."/>
            <person name="Warren A.J."/>
            <person name="Minczuk M."/>
        </authorList>
    </citation>
    <scope>STRUCTURE BY ELECTRON MICROSCOPY (2.9 ANGSTROMS) IN COMPLEX WITH MTLSU</scope>
    <scope>SUBUNIT</scope>
</reference>